<protein>
    <recommendedName>
        <fullName>Stress response protein NST1</fullName>
    </recommendedName>
</protein>
<name>NST1_LODEL</name>
<comment type="function">
    <text evidence="1">May act as a negative regulator of salt tolerance.</text>
</comment>
<comment type="subcellular location">
    <subcellularLocation>
        <location evidence="1">Cytoplasm</location>
    </subcellularLocation>
</comment>
<comment type="similarity">
    <text evidence="4">Belongs to the NST1 family.</text>
</comment>
<feature type="chain" id="PRO_0000324452" description="Stress response protein NST1">
    <location>
        <begin position="1"/>
        <end position="1637"/>
    </location>
</feature>
<feature type="region of interest" description="Disordered" evidence="3">
    <location>
        <begin position="1"/>
        <end position="155"/>
    </location>
</feature>
<feature type="region of interest" description="Disordered" evidence="3">
    <location>
        <begin position="221"/>
        <end position="252"/>
    </location>
</feature>
<feature type="region of interest" description="Disordered" evidence="3">
    <location>
        <begin position="442"/>
        <end position="494"/>
    </location>
</feature>
<feature type="region of interest" description="Disordered" evidence="3">
    <location>
        <begin position="504"/>
        <end position="523"/>
    </location>
</feature>
<feature type="region of interest" description="Disordered" evidence="3">
    <location>
        <begin position="681"/>
        <end position="734"/>
    </location>
</feature>
<feature type="region of interest" description="Disordered" evidence="3">
    <location>
        <begin position="746"/>
        <end position="825"/>
    </location>
</feature>
<feature type="region of interest" description="Disordered" evidence="3">
    <location>
        <begin position="871"/>
        <end position="1036"/>
    </location>
</feature>
<feature type="region of interest" description="Disordered" evidence="3">
    <location>
        <begin position="1049"/>
        <end position="1075"/>
    </location>
</feature>
<feature type="region of interest" description="Disordered" evidence="3">
    <location>
        <begin position="1176"/>
        <end position="1299"/>
    </location>
</feature>
<feature type="region of interest" description="Disordered" evidence="3">
    <location>
        <begin position="1512"/>
        <end position="1534"/>
    </location>
</feature>
<feature type="coiled-coil region" evidence="2">
    <location>
        <begin position="855"/>
        <end position="1023"/>
    </location>
</feature>
<feature type="compositionally biased region" description="Polar residues" evidence="3">
    <location>
        <begin position="1"/>
        <end position="17"/>
    </location>
</feature>
<feature type="compositionally biased region" description="Basic and acidic residues" evidence="3">
    <location>
        <begin position="24"/>
        <end position="33"/>
    </location>
</feature>
<feature type="compositionally biased region" description="Low complexity" evidence="3">
    <location>
        <begin position="34"/>
        <end position="53"/>
    </location>
</feature>
<feature type="compositionally biased region" description="Low complexity" evidence="3">
    <location>
        <begin position="64"/>
        <end position="113"/>
    </location>
</feature>
<feature type="compositionally biased region" description="Basic residues" evidence="3">
    <location>
        <begin position="124"/>
        <end position="134"/>
    </location>
</feature>
<feature type="compositionally biased region" description="Low complexity" evidence="3">
    <location>
        <begin position="135"/>
        <end position="155"/>
    </location>
</feature>
<feature type="compositionally biased region" description="Low complexity" evidence="3">
    <location>
        <begin position="446"/>
        <end position="470"/>
    </location>
</feature>
<feature type="compositionally biased region" description="Polar residues" evidence="3">
    <location>
        <begin position="471"/>
        <end position="487"/>
    </location>
</feature>
<feature type="compositionally biased region" description="Polar residues" evidence="3">
    <location>
        <begin position="692"/>
        <end position="706"/>
    </location>
</feature>
<feature type="compositionally biased region" description="Basic and acidic residues" evidence="3">
    <location>
        <begin position="717"/>
        <end position="734"/>
    </location>
</feature>
<feature type="compositionally biased region" description="Acidic residues" evidence="3">
    <location>
        <begin position="754"/>
        <end position="808"/>
    </location>
</feature>
<feature type="compositionally biased region" description="Basic and acidic residues" evidence="3">
    <location>
        <begin position="871"/>
        <end position="887"/>
    </location>
</feature>
<feature type="compositionally biased region" description="Basic and acidic residues" evidence="3">
    <location>
        <begin position="896"/>
        <end position="1021"/>
    </location>
</feature>
<feature type="compositionally biased region" description="Polar residues" evidence="3">
    <location>
        <begin position="1049"/>
        <end position="1063"/>
    </location>
</feature>
<feature type="compositionally biased region" description="Low complexity" evidence="3">
    <location>
        <begin position="1176"/>
        <end position="1199"/>
    </location>
</feature>
<feature type="compositionally biased region" description="Polar residues" evidence="3">
    <location>
        <begin position="1201"/>
        <end position="1228"/>
    </location>
</feature>
<feature type="compositionally biased region" description="Low complexity" evidence="3">
    <location>
        <begin position="1234"/>
        <end position="1257"/>
    </location>
</feature>
<feature type="compositionally biased region" description="Polar residues" evidence="3">
    <location>
        <begin position="1258"/>
        <end position="1267"/>
    </location>
</feature>
<feature type="compositionally biased region" description="Low complexity" evidence="3">
    <location>
        <begin position="1282"/>
        <end position="1299"/>
    </location>
</feature>
<feature type="compositionally biased region" description="Low complexity" evidence="3">
    <location>
        <begin position="1514"/>
        <end position="1534"/>
    </location>
</feature>
<accession>A5DXA0</accession>
<sequence>MSNRGNLNLNLPPSSGKYTVGENVHFELSKEKNNSTNSNPHTSSTSTSNSNNTGIGVAKSLSTNDNNNDNDNQQPQQHEQIQSKAKSQSQSQSQSQSQPQTQVQVEQQQQQQSLVNSPAAQLAAKKRKKKKSKKSSNNNGNNSNTNSNSNSEITNTSISMPHAFLNNPDEDYPTSRVIKQAPNGDVIVESLDHVGGTYEDHLHDDYSDEDTLHHHLRQAPHQASNNNHIHNHSHTSSHPLQHTPNHLHHASHNANPLTQHISASGASMRSHGHNDAHSNLWDSASLEEQEKLKEFWESLEESQKLDLVKIDKQSIMKMFKNETRQHLQQLLQNGVLNNQNASSSNNCACKYCGRRNNIIEEELENIYDNHFDDIIDFIHEVRDINDLNALPGLLFGGFHMLEEERRLQKRKQLHNEHLELAKSSNLQNQAHIEEIRAQMDKLKMNQRQQSQSQSQSQSQQQRDVQTAQSQVLSKDSSLKNANTSMNKQHTSQQLLQPQIQAQGKNNLQQNHHTHHHHQQPLQHPTVQISATFLSSNPTETQLFNKLLDPKLFEALESLDLQKMKEVSHFDPQNTAHINMLEKAGSLREIVRDLHNVDRNHLEKGMSYVQNMGKLFSNIASLNPSNPEDAEKIMTGQLNEQFNQGLSTFAEDLLKNDGSSFISMMETLSELRSAREELLKEKTPYNGLLTKTPAATSQDREQQVQPNHSHWLDEDDHDHEHEHEHEHEHEHEIDDEDHEHYCCHHHQHHHLHGDEEYDEEDEEDDEEYEYGDDEEEEDEEDEEEGEDEELEEVVEDDVDEEILDDEEEFDAKNASDTESEISEEEKMQEIRRLFLIQVIKLFQERLKSAYKEKVSKDNTRKLFEELEAEEAAKREKEAKKLKQKEKAKERKRLQQLAKEEEKRKKEEEAKRIAEELHAKQEQLKLEQKKKKEEARLRREEEKKKKLEEIKRREAEHKRKVEEQIKHDEEQRRLKEERRKELEEKKRQKEEEKKQKELLKKQKEEEKERLRIEREKQLEKEAAVSKSIPQPSPKSKHVMKLAATFQSDIPSKQNQAQNGNQSHLPPQSRLRQDEENPQKTFANSVFSAKEYNSIYQPLPGSLSNNSSSAALSVGTQLSNFQALSHPQQQQQQYSNDIYLPSANLATATVQSPRSAPINLPNGTSAVGVSLANHLSLNNSSQGSPWTTNSTLSSNLGSTGLSHGQGQTVSGVNTNLPSSIGITSGGASQIFQPQPQPQLQPHQPQQQQQQQQQQQQQQQQNYFSPFNSFSEPLVGEPFQGIVHPTTNINNSTTASSSTGAIIPPMNPSGNIWNSNIGATATNAPASVSRNNSVWSNNAITPKPSEPSFLSTAGRSSSLWGTLANAPVASSSNNNSNATANYDNNNVRSLGSSSFAPANPGQHELEVIQTAIYNCFQMMQNSNQLEFNVAPLMAIFSNVRSLTNKTQLTVNQFLNCCVSNSLYQFDFVYDDFGTVTHLKVGLNGLNDHNSVNGFSKSSTTPPLLPISAMNSKILGYTQQQQQQQQPQPQPQSQQQYPLQHSHQQRLLQLFSNNQTILSQDVTSSAFATGTNTQGSSYGQVQLGAVSPAFARTSPPGLFPNDIPLLSTINELNSTPSTGTGTGTGSGVGAGTGAVFGSGIWN</sequence>
<organism>
    <name type="scientific">Lodderomyces elongisporus (strain ATCC 11503 / CBS 2605 / JCM 1781 / NBRC 1676 / NRRL YB-4239)</name>
    <name type="common">Yeast</name>
    <name type="synonym">Saccharomyces elongisporus</name>
    <dbReference type="NCBI Taxonomy" id="379508"/>
    <lineage>
        <taxon>Eukaryota</taxon>
        <taxon>Fungi</taxon>
        <taxon>Dikarya</taxon>
        <taxon>Ascomycota</taxon>
        <taxon>Saccharomycotina</taxon>
        <taxon>Pichiomycetes</taxon>
        <taxon>Debaryomycetaceae</taxon>
        <taxon>Candida/Lodderomyces clade</taxon>
        <taxon>Lodderomyces</taxon>
    </lineage>
</organism>
<gene>
    <name type="primary">NST1</name>
    <name type="ORF">LELG_01987</name>
</gene>
<dbReference type="EMBL" id="CH981525">
    <property type="protein sequence ID" value="EDK43808.1"/>
    <property type="molecule type" value="Genomic_DNA"/>
</dbReference>
<dbReference type="RefSeq" id="XP_001527158.1">
    <property type="nucleotide sequence ID" value="XM_001527108.1"/>
</dbReference>
<dbReference type="SMR" id="A5DXA0"/>
<dbReference type="GeneID" id="5233720"/>
<dbReference type="KEGG" id="lel:PVL30_001957"/>
<dbReference type="VEuPathDB" id="FungiDB:LELG_01987"/>
<dbReference type="eggNOG" id="ENOG502QSSK">
    <property type="taxonomic scope" value="Eukaryota"/>
</dbReference>
<dbReference type="HOGENOM" id="CLU_003284_0_0_1"/>
<dbReference type="InParanoid" id="A5DXA0"/>
<dbReference type="OMA" id="SCACKYC"/>
<dbReference type="OrthoDB" id="21629at2759"/>
<dbReference type="Proteomes" id="UP000001996">
    <property type="component" value="Unassembled WGS sequence"/>
</dbReference>
<dbReference type="GO" id="GO:0005737">
    <property type="term" value="C:cytoplasm"/>
    <property type="evidence" value="ECO:0007669"/>
    <property type="project" value="UniProtKB-SubCell"/>
</dbReference>
<dbReference type="InterPro" id="IPR025279">
    <property type="entry name" value="NST1"/>
</dbReference>
<dbReference type="PANTHER" id="PTHR24258:SF116">
    <property type="entry name" value="FI16631P1-RELATED"/>
    <property type="match status" value="1"/>
</dbReference>
<dbReference type="PANTHER" id="PTHR24258">
    <property type="entry name" value="SERINE PROTEASE-RELATED"/>
    <property type="match status" value="1"/>
</dbReference>
<dbReference type="Pfam" id="PF13945">
    <property type="entry name" value="NST1"/>
    <property type="match status" value="1"/>
</dbReference>
<keyword id="KW-0175">Coiled coil</keyword>
<keyword id="KW-0963">Cytoplasm</keyword>
<keyword id="KW-1185">Reference proteome</keyword>
<keyword id="KW-0346">Stress response</keyword>
<proteinExistence type="inferred from homology"/>
<evidence type="ECO:0000250" key="1"/>
<evidence type="ECO:0000255" key="2"/>
<evidence type="ECO:0000256" key="3">
    <source>
        <dbReference type="SAM" id="MobiDB-lite"/>
    </source>
</evidence>
<evidence type="ECO:0000305" key="4"/>
<reference key="1">
    <citation type="journal article" date="2009" name="Nature">
        <title>Evolution of pathogenicity and sexual reproduction in eight Candida genomes.</title>
        <authorList>
            <person name="Butler G."/>
            <person name="Rasmussen M.D."/>
            <person name="Lin M.F."/>
            <person name="Santos M.A.S."/>
            <person name="Sakthikumar S."/>
            <person name="Munro C.A."/>
            <person name="Rheinbay E."/>
            <person name="Grabherr M."/>
            <person name="Forche A."/>
            <person name="Reedy J.L."/>
            <person name="Agrafioti I."/>
            <person name="Arnaud M.B."/>
            <person name="Bates S."/>
            <person name="Brown A.J.P."/>
            <person name="Brunke S."/>
            <person name="Costanzo M.C."/>
            <person name="Fitzpatrick D.A."/>
            <person name="de Groot P.W.J."/>
            <person name="Harris D."/>
            <person name="Hoyer L.L."/>
            <person name="Hube B."/>
            <person name="Klis F.M."/>
            <person name="Kodira C."/>
            <person name="Lennard N."/>
            <person name="Logue M.E."/>
            <person name="Martin R."/>
            <person name="Neiman A.M."/>
            <person name="Nikolaou E."/>
            <person name="Quail M.A."/>
            <person name="Quinn J."/>
            <person name="Santos M.C."/>
            <person name="Schmitzberger F.F."/>
            <person name="Sherlock G."/>
            <person name="Shah P."/>
            <person name="Silverstein K.A.T."/>
            <person name="Skrzypek M.S."/>
            <person name="Soll D."/>
            <person name="Staggs R."/>
            <person name="Stansfield I."/>
            <person name="Stumpf M.P.H."/>
            <person name="Sudbery P.E."/>
            <person name="Srikantha T."/>
            <person name="Zeng Q."/>
            <person name="Berman J."/>
            <person name="Berriman M."/>
            <person name="Heitman J."/>
            <person name="Gow N.A.R."/>
            <person name="Lorenz M.C."/>
            <person name="Birren B.W."/>
            <person name="Kellis M."/>
            <person name="Cuomo C.A."/>
        </authorList>
    </citation>
    <scope>NUCLEOTIDE SEQUENCE [LARGE SCALE GENOMIC DNA]</scope>
    <source>
        <strain>ATCC 11503 / BCRC 21390 / CBS 2605 / JCM 1781 / NBRC 1676 / NRRL YB-4239</strain>
    </source>
</reference>